<sequence>MSQERLLSVLRAPHISEKATNNAEKSNTVVLKVALDANKAEIAAAVAQLFEVKVDSVRTVVVKGKTKRRGNKMGRRSDWKKAYVTLAEGQNLDFVDSAE</sequence>
<gene>
    <name evidence="1" type="primary">rplW</name>
    <name type="ordered locus">NTHI0940</name>
</gene>
<accession>Q4QMC0</accession>
<proteinExistence type="inferred from homology"/>
<keyword id="KW-0687">Ribonucleoprotein</keyword>
<keyword id="KW-0689">Ribosomal protein</keyword>
<keyword id="KW-0694">RNA-binding</keyword>
<keyword id="KW-0699">rRNA-binding</keyword>
<reference key="1">
    <citation type="journal article" date="2005" name="J. Bacteriol.">
        <title>Genomic sequence of an otitis media isolate of nontypeable Haemophilus influenzae: comparative study with H. influenzae serotype d, strain KW20.</title>
        <authorList>
            <person name="Harrison A."/>
            <person name="Dyer D.W."/>
            <person name="Gillaspy A."/>
            <person name="Ray W.C."/>
            <person name="Mungur R."/>
            <person name="Carson M.B."/>
            <person name="Zhong H."/>
            <person name="Gipson J."/>
            <person name="Gipson M."/>
            <person name="Johnson L.S."/>
            <person name="Lewis L."/>
            <person name="Bakaletz L.O."/>
            <person name="Munson R.S. Jr."/>
        </authorList>
    </citation>
    <scope>NUCLEOTIDE SEQUENCE [LARGE SCALE GENOMIC DNA]</scope>
    <source>
        <strain>86-028NP</strain>
    </source>
</reference>
<protein>
    <recommendedName>
        <fullName evidence="1">Large ribosomal subunit protein uL23</fullName>
    </recommendedName>
    <alternativeName>
        <fullName evidence="2">50S ribosomal protein L23</fullName>
    </alternativeName>
</protein>
<evidence type="ECO:0000255" key="1">
    <source>
        <dbReference type="HAMAP-Rule" id="MF_01369"/>
    </source>
</evidence>
<evidence type="ECO:0000305" key="2"/>
<comment type="function">
    <text evidence="1">One of the early assembly proteins it binds 23S rRNA. One of the proteins that surrounds the polypeptide exit tunnel on the outside of the ribosome. Forms the main docking site for trigger factor binding to the ribosome.</text>
</comment>
<comment type="subunit">
    <text evidence="1">Part of the 50S ribosomal subunit. Contacts protein L29, and trigger factor when it is bound to the ribosome.</text>
</comment>
<comment type="similarity">
    <text evidence="1">Belongs to the universal ribosomal protein uL23 family.</text>
</comment>
<feature type="chain" id="PRO_0000272757" description="Large ribosomal subunit protein uL23">
    <location>
        <begin position="1"/>
        <end position="99"/>
    </location>
</feature>
<name>RL23_HAEI8</name>
<organism>
    <name type="scientific">Haemophilus influenzae (strain 86-028NP)</name>
    <dbReference type="NCBI Taxonomy" id="281310"/>
    <lineage>
        <taxon>Bacteria</taxon>
        <taxon>Pseudomonadati</taxon>
        <taxon>Pseudomonadota</taxon>
        <taxon>Gammaproteobacteria</taxon>
        <taxon>Pasteurellales</taxon>
        <taxon>Pasteurellaceae</taxon>
        <taxon>Haemophilus</taxon>
    </lineage>
</organism>
<dbReference type="EMBL" id="CP000057">
    <property type="protein sequence ID" value="AAX87827.1"/>
    <property type="molecule type" value="Genomic_DNA"/>
</dbReference>
<dbReference type="RefSeq" id="WP_005632756.1">
    <property type="nucleotide sequence ID" value="NC_007146.2"/>
</dbReference>
<dbReference type="SMR" id="Q4QMC0"/>
<dbReference type="GeneID" id="93298791"/>
<dbReference type="KEGG" id="hit:NTHI0940"/>
<dbReference type="HOGENOM" id="CLU_037562_3_1_6"/>
<dbReference type="Proteomes" id="UP000002525">
    <property type="component" value="Chromosome"/>
</dbReference>
<dbReference type="GO" id="GO:1990904">
    <property type="term" value="C:ribonucleoprotein complex"/>
    <property type="evidence" value="ECO:0007669"/>
    <property type="project" value="UniProtKB-KW"/>
</dbReference>
<dbReference type="GO" id="GO:0005840">
    <property type="term" value="C:ribosome"/>
    <property type="evidence" value="ECO:0007669"/>
    <property type="project" value="UniProtKB-KW"/>
</dbReference>
<dbReference type="GO" id="GO:0019843">
    <property type="term" value="F:rRNA binding"/>
    <property type="evidence" value="ECO:0007669"/>
    <property type="project" value="UniProtKB-UniRule"/>
</dbReference>
<dbReference type="GO" id="GO:0003735">
    <property type="term" value="F:structural constituent of ribosome"/>
    <property type="evidence" value="ECO:0007669"/>
    <property type="project" value="InterPro"/>
</dbReference>
<dbReference type="GO" id="GO:0006412">
    <property type="term" value="P:translation"/>
    <property type="evidence" value="ECO:0007669"/>
    <property type="project" value="UniProtKB-UniRule"/>
</dbReference>
<dbReference type="FunFam" id="3.30.70.330:FF:000001">
    <property type="entry name" value="50S ribosomal protein L23"/>
    <property type="match status" value="1"/>
</dbReference>
<dbReference type="Gene3D" id="3.30.70.330">
    <property type="match status" value="1"/>
</dbReference>
<dbReference type="HAMAP" id="MF_01369_B">
    <property type="entry name" value="Ribosomal_uL23_B"/>
    <property type="match status" value="1"/>
</dbReference>
<dbReference type="InterPro" id="IPR012677">
    <property type="entry name" value="Nucleotide-bd_a/b_plait_sf"/>
</dbReference>
<dbReference type="InterPro" id="IPR013025">
    <property type="entry name" value="Ribosomal_uL23-like"/>
</dbReference>
<dbReference type="InterPro" id="IPR012678">
    <property type="entry name" value="Ribosomal_uL23/eL15/eS24_sf"/>
</dbReference>
<dbReference type="InterPro" id="IPR001014">
    <property type="entry name" value="Ribosomal_uL23_CS"/>
</dbReference>
<dbReference type="NCBIfam" id="NF004358">
    <property type="entry name" value="PRK05738.1-1"/>
    <property type="match status" value="1"/>
</dbReference>
<dbReference type="NCBIfam" id="NF004359">
    <property type="entry name" value="PRK05738.1-3"/>
    <property type="match status" value="1"/>
</dbReference>
<dbReference type="NCBIfam" id="NF004363">
    <property type="entry name" value="PRK05738.2-4"/>
    <property type="match status" value="1"/>
</dbReference>
<dbReference type="PANTHER" id="PTHR11620">
    <property type="entry name" value="60S RIBOSOMAL PROTEIN L23A"/>
    <property type="match status" value="1"/>
</dbReference>
<dbReference type="Pfam" id="PF00276">
    <property type="entry name" value="Ribosomal_L23"/>
    <property type="match status" value="1"/>
</dbReference>
<dbReference type="SUPFAM" id="SSF54189">
    <property type="entry name" value="Ribosomal proteins S24e, L23 and L15e"/>
    <property type="match status" value="1"/>
</dbReference>
<dbReference type="PROSITE" id="PS00050">
    <property type="entry name" value="RIBOSOMAL_L23"/>
    <property type="match status" value="1"/>
</dbReference>